<name>DXR_XYLF2</name>
<protein>
    <recommendedName>
        <fullName evidence="1">1-deoxy-D-xylulose 5-phosphate reductoisomerase</fullName>
        <shortName evidence="1">DXP reductoisomerase</shortName>
        <ecNumber evidence="1">1.1.1.267</ecNumber>
    </recommendedName>
    <alternativeName>
        <fullName evidence="1">1-deoxyxylulose-5-phosphate reductoisomerase</fullName>
    </alternativeName>
    <alternativeName>
        <fullName evidence="1">2-C-methyl-D-erythritol 4-phosphate synthase</fullName>
    </alternativeName>
</protein>
<evidence type="ECO:0000255" key="1">
    <source>
        <dbReference type="HAMAP-Rule" id="MF_00183"/>
    </source>
</evidence>
<comment type="function">
    <text evidence="1">Catalyzes the NADPH-dependent rearrangement and reduction of 1-deoxy-D-xylulose-5-phosphate (DXP) to 2-C-methyl-D-erythritol 4-phosphate (MEP).</text>
</comment>
<comment type="catalytic activity">
    <reaction evidence="1">
        <text>2-C-methyl-D-erythritol 4-phosphate + NADP(+) = 1-deoxy-D-xylulose 5-phosphate + NADPH + H(+)</text>
        <dbReference type="Rhea" id="RHEA:13717"/>
        <dbReference type="ChEBI" id="CHEBI:15378"/>
        <dbReference type="ChEBI" id="CHEBI:57783"/>
        <dbReference type="ChEBI" id="CHEBI:57792"/>
        <dbReference type="ChEBI" id="CHEBI:58262"/>
        <dbReference type="ChEBI" id="CHEBI:58349"/>
        <dbReference type="EC" id="1.1.1.267"/>
    </reaction>
    <physiologicalReaction direction="right-to-left" evidence="1">
        <dbReference type="Rhea" id="RHEA:13719"/>
    </physiologicalReaction>
</comment>
<comment type="cofactor">
    <cofactor evidence="1">
        <name>Mg(2+)</name>
        <dbReference type="ChEBI" id="CHEBI:18420"/>
    </cofactor>
    <cofactor evidence="1">
        <name>Mn(2+)</name>
        <dbReference type="ChEBI" id="CHEBI:29035"/>
    </cofactor>
</comment>
<comment type="pathway">
    <text evidence="1">Isoprenoid biosynthesis; isopentenyl diphosphate biosynthesis via DXP pathway; isopentenyl diphosphate from 1-deoxy-D-xylulose 5-phosphate: step 1/6.</text>
</comment>
<comment type="similarity">
    <text evidence="1">Belongs to the DXR family.</text>
</comment>
<accession>B2I7P4</accession>
<proteinExistence type="inferred from homology"/>
<keyword id="KW-0414">Isoprene biosynthesis</keyword>
<keyword id="KW-0464">Manganese</keyword>
<keyword id="KW-0479">Metal-binding</keyword>
<keyword id="KW-0521">NADP</keyword>
<keyword id="KW-0560">Oxidoreductase</keyword>
<gene>
    <name evidence="1" type="primary">dxr</name>
    <name type="ordered locus">XfasM23_0324</name>
</gene>
<sequence length="394" mass="41867">MTKPIRNVAVLGATGSIGAAALDVLARHPRQFHVSLLAAGQRVDALLALCRTYRPDHAVIGDATLYTTLRDGLNAAGLATKAYAGEAALAELVASTTCDTVVAAIVGAAGLHSTLAAARAGKRLLLANKESLVLAGMLLMREASISGAEIIPIDSEHNAIFQCLRSRTTDGVHRVTLTASGGPFRGHNRTMLAKITPTQAMAHPTWSMGPKISVDSATLMNKGLEVIEAHHLFGLPSEQIDVLVHPQSLVHSLVEFIDGSTLAQLSLPDMRTTLAVGLAWPERIGSGVQGLDLMKHNRLDFEHPDTETFSCLRLARDAMQTGGTAPAVLNAANEIAVSAFLQGRIGFLTIPALIEHALTTLPRYEADTLETLLTVDTETRRITHAALTHFPLPL</sequence>
<feature type="chain" id="PRO_1000098528" description="1-deoxy-D-xylulose 5-phosphate reductoisomerase">
    <location>
        <begin position="1"/>
        <end position="394"/>
    </location>
</feature>
<feature type="binding site" evidence="1">
    <location>
        <position position="14"/>
    </location>
    <ligand>
        <name>NADPH</name>
        <dbReference type="ChEBI" id="CHEBI:57783"/>
    </ligand>
</feature>
<feature type="binding site" evidence="1">
    <location>
        <position position="15"/>
    </location>
    <ligand>
        <name>NADPH</name>
        <dbReference type="ChEBI" id="CHEBI:57783"/>
    </ligand>
</feature>
<feature type="binding site" evidence="1">
    <location>
        <position position="16"/>
    </location>
    <ligand>
        <name>NADPH</name>
        <dbReference type="ChEBI" id="CHEBI:57783"/>
    </ligand>
</feature>
<feature type="binding site" evidence="1">
    <location>
        <position position="17"/>
    </location>
    <ligand>
        <name>NADPH</name>
        <dbReference type="ChEBI" id="CHEBI:57783"/>
    </ligand>
</feature>
<feature type="binding site" evidence="1">
    <location>
        <position position="40"/>
    </location>
    <ligand>
        <name>NADPH</name>
        <dbReference type="ChEBI" id="CHEBI:57783"/>
    </ligand>
</feature>
<feature type="binding site" evidence="1">
    <location>
        <position position="128"/>
    </location>
    <ligand>
        <name>NADPH</name>
        <dbReference type="ChEBI" id="CHEBI:57783"/>
    </ligand>
</feature>
<feature type="binding site" evidence="1">
    <location>
        <position position="129"/>
    </location>
    <ligand>
        <name>1-deoxy-D-xylulose 5-phosphate</name>
        <dbReference type="ChEBI" id="CHEBI:57792"/>
    </ligand>
</feature>
<feature type="binding site" evidence="1">
    <location>
        <position position="130"/>
    </location>
    <ligand>
        <name>NADPH</name>
        <dbReference type="ChEBI" id="CHEBI:57783"/>
    </ligand>
</feature>
<feature type="binding site" evidence="1">
    <location>
        <position position="154"/>
    </location>
    <ligand>
        <name>Mn(2+)</name>
        <dbReference type="ChEBI" id="CHEBI:29035"/>
    </ligand>
</feature>
<feature type="binding site" evidence="1">
    <location>
        <position position="155"/>
    </location>
    <ligand>
        <name>1-deoxy-D-xylulose 5-phosphate</name>
        <dbReference type="ChEBI" id="CHEBI:57792"/>
    </ligand>
</feature>
<feature type="binding site" evidence="1">
    <location>
        <position position="156"/>
    </location>
    <ligand>
        <name>1-deoxy-D-xylulose 5-phosphate</name>
        <dbReference type="ChEBI" id="CHEBI:57792"/>
    </ligand>
</feature>
<feature type="binding site" evidence="1">
    <location>
        <position position="156"/>
    </location>
    <ligand>
        <name>Mn(2+)</name>
        <dbReference type="ChEBI" id="CHEBI:29035"/>
    </ligand>
</feature>
<feature type="binding site" evidence="1">
    <location>
        <position position="180"/>
    </location>
    <ligand>
        <name>1-deoxy-D-xylulose 5-phosphate</name>
        <dbReference type="ChEBI" id="CHEBI:57792"/>
    </ligand>
</feature>
<feature type="binding site" evidence="1">
    <location>
        <position position="203"/>
    </location>
    <ligand>
        <name>1-deoxy-D-xylulose 5-phosphate</name>
        <dbReference type="ChEBI" id="CHEBI:57792"/>
    </ligand>
</feature>
<feature type="binding site" evidence="1">
    <location>
        <position position="209"/>
    </location>
    <ligand>
        <name>NADPH</name>
        <dbReference type="ChEBI" id="CHEBI:57783"/>
    </ligand>
</feature>
<feature type="binding site" evidence="1">
    <location>
        <position position="216"/>
    </location>
    <ligand>
        <name>1-deoxy-D-xylulose 5-phosphate</name>
        <dbReference type="ChEBI" id="CHEBI:57792"/>
    </ligand>
</feature>
<feature type="binding site" evidence="1">
    <location>
        <position position="221"/>
    </location>
    <ligand>
        <name>1-deoxy-D-xylulose 5-phosphate</name>
        <dbReference type="ChEBI" id="CHEBI:57792"/>
    </ligand>
</feature>
<feature type="binding site" evidence="1">
    <location>
        <position position="222"/>
    </location>
    <ligand>
        <name>1-deoxy-D-xylulose 5-phosphate</name>
        <dbReference type="ChEBI" id="CHEBI:57792"/>
    </ligand>
</feature>
<feature type="binding site" evidence="1">
    <location>
        <position position="225"/>
    </location>
    <ligand>
        <name>1-deoxy-D-xylulose 5-phosphate</name>
        <dbReference type="ChEBI" id="CHEBI:57792"/>
    </ligand>
</feature>
<feature type="binding site" evidence="1">
    <location>
        <position position="225"/>
    </location>
    <ligand>
        <name>Mn(2+)</name>
        <dbReference type="ChEBI" id="CHEBI:29035"/>
    </ligand>
</feature>
<organism>
    <name type="scientific">Xylella fastidiosa (strain M23)</name>
    <dbReference type="NCBI Taxonomy" id="405441"/>
    <lineage>
        <taxon>Bacteria</taxon>
        <taxon>Pseudomonadati</taxon>
        <taxon>Pseudomonadota</taxon>
        <taxon>Gammaproteobacteria</taxon>
        <taxon>Lysobacterales</taxon>
        <taxon>Lysobacteraceae</taxon>
        <taxon>Xylella</taxon>
    </lineage>
</organism>
<dbReference type="EC" id="1.1.1.267" evidence="1"/>
<dbReference type="EMBL" id="CP001011">
    <property type="protein sequence ID" value="ACB91772.1"/>
    <property type="molecule type" value="Genomic_DNA"/>
</dbReference>
<dbReference type="SMR" id="B2I7P4"/>
<dbReference type="KEGG" id="xfn:XfasM23_0324"/>
<dbReference type="HOGENOM" id="CLU_035714_4_0_6"/>
<dbReference type="UniPathway" id="UPA00056">
    <property type="reaction ID" value="UER00092"/>
</dbReference>
<dbReference type="Proteomes" id="UP000001698">
    <property type="component" value="Chromosome"/>
</dbReference>
<dbReference type="GO" id="GO:0030604">
    <property type="term" value="F:1-deoxy-D-xylulose-5-phosphate reductoisomerase activity"/>
    <property type="evidence" value="ECO:0007669"/>
    <property type="project" value="UniProtKB-UniRule"/>
</dbReference>
<dbReference type="GO" id="GO:0030145">
    <property type="term" value="F:manganese ion binding"/>
    <property type="evidence" value="ECO:0007669"/>
    <property type="project" value="TreeGrafter"/>
</dbReference>
<dbReference type="GO" id="GO:0070402">
    <property type="term" value="F:NADPH binding"/>
    <property type="evidence" value="ECO:0007669"/>
    <property type="project" value="InterPro"/>
</dbReference>
<dbReference type="GO" id="GO:0051484">
    <property type="term" value="P:isopentenyl diphosphate biosynthetic process, methylerythritol 4-phosphate pathway involved in terpenoid biosynthetic process"/>
    <property type="evidence" value="ECO:0007669"/>
    <property type="project" value="TreeGrafter"/>
</dbReference>
<dbReference type="FunFam" id="3.40.50.720:FF:000045">
    <property type="entry name" value="1-deoxy-D-xylulose 5-phosphate reductoisomerase"/>
    <property type="match status" value="1"/>
</dbReference>
<dbReference type="Gene3D" id="1.10.1740.10">
    <property type="match status" value="1"/>
</dbReference>
<dbReference type="Gene3D" id="3.40.50.720">
    <property type="entry name" value="NAD(P)-binding Rossmann-like Domain"/>
    <property type="match status" value="1"/>
</dbReference>
<dbReference type="HAMAP" id="MF_00183">
    <property type="entry name" value="DXP_reductoisom"/>
    <property type="match status" value="1"/>
</dbReference>
<dbReference type="InterPro" id="IPR003821">
    <property type="entry name" value="DXP_reductoisomerase"/>
</dbReference>
<dbReference type="InterPro" id="IPR013644">
    <property type="entry name" value="DXP_reductoisomerase_C"/>
</dbReference>
<dbReference type="InterPro" id="IPR013512">
    <property type="entry name" value="DXP_reductoisomerase_N"/>
</dbReference>
<dbReference type="InterPro" id="IPR026877">
    <property type="entry name" value="DXPR_C"/>
</dbReference>
<dbReference type="InterPro" id="IPR036169">
    <property type="entry name" value="DXPR_C_sf"/>
</dbReference>
<dbReference type="InterPro" id="IPR036291">
    <property type="entry name" value="NAD(P)-bd_dom_sf"/>
</dbReference>
<dbReference type="NCBIfam" id="TIGR00243">
    <property type="entry name" value="Dxr"/>
    <property type="match status" value="1"/>
</dbReference>
<dbReference type="PANTHER" id="PTHR30525">
    <property type="entry name" value="1-DEOXY-D-XYLULOSE 5-PHOSPHATE REDUCTOISOMERASE"/>
    <property type="match status" value="1"/>
</dbReference>
<dbReference type="PANTHER" id="PTHR30525:SF0">
    <property type="entry name" value="1-DEOXY-D-XYLULOSE 5-PHOSPHATE REDUCTOISOMERASE, CHLOROPLASTIC"/>
    <property type="match status" value="1"/>
</dbReference>
<dbReference type="Pfam" id="PF08436">
    <property type="entry name" value="DXP_redisom_C"/>
    <property type="match status" value="1"/>
</dbReference>
<dbReference type="Pfam" id="PF02670">
    <property type="entry name" value="DXP_reductoisom"/>
    <property type="match status" value="1"/>
</dbReference>
<dbReference type="Pfam" id="PF13288">
    <property type="entry name" value="DXPR_C"/>
    <property type="match status" value="1"/>
</dbReference>
<dbReference type="PIRSF" id="PIRSF006205">
    <property type="entry name" value="Dxp_reductismrs"/>
    <property type="match status" value="1"/>
</dbReference>
<dbReference type="SUPFAM" id="SSF69055">
    <property type="entry name" value="1-deoxy-D-xylulose-5-phosphate reductoisomerase, C-terminal domain"/>
    <property type="match status" value="1"/>
</dbReference>
<dbReference type="SUPFAM" id="SSF55347">
    <property type="entry name" value="Glyceraldehyde-3-phosphate dehydrogenase-like, C-terminal domain"/>
    <property type="match status" value="1"/>
</dbReference>
<dbReference type="SUPFAM" id="SSF51735">
    <property type="entry name" value="NAD(P)-binding Rossmann-fold domains"/>
    <property type="match status" value="1"/>
</dbReference>
<reference key="1">
    <citation type="journal article" date="2010" name="J. Bacteriol.">
        <title>Whole genome sequences of two Xylella fastidiosa strains (M12 and M23) causing almond leaf scorch disease in California.</title>
        <authorList>
            <person name="Chen J."/>
            <person name="Xie G."/>
            <person name="Han S."/>
            <person name="Chertkov O."/>
            <person name="Sims D."/>
            <person name="Civerolo E.L."/>
        </authorList>
    </citation>
    <scope>NUCLEOTIDE SEQUENCE [LARGE SCALE GENOMIC DNA]</scope>
    <source>
        <strain>M23</strain>
    </source>
</reference>